<protein>
    <recommendedName>
        <fullName evidence="1">Sec-independent protein translocase protein TatA</fullName>
    </recommendedName>
</protein>
<feature type="chain" id="PRO_1000078304" description="Sec-independent protein translocase protein TatA">
    <location>
        <begin position="1"/>
        <end position="67"/>
    </location>
</feature>
<feature type="transmembrane region" description="Helical" evidence="1">
    <location>
        <begin position="1"/>
        <end position="21"/>
    </location>
</feature>
<evidence type="ECO:0000255" key="1">
    <source>
        <dbReference type="HAMAP-Rule" id="MF_00236"/>
    </source>
</evidence>
<name>TATA_CHLTE</name>
<accession>Q8KC14</accession>
<organism>
    <name type="scientific">Chlorobaculum tepidum (strain ATCC 49652 / DSM 12025 / NBRC 103806 / TLS)</name>
    <name type="common">Chlorobium tepidum</name>
    <dbReference type="NCBI Taxonomy" id="194439"/>
    <lineage>
        <taxon>Bacteria</taxon>
        <taxon>Pseudomonadati</taxon>
        <taxon>Chlorobiota</taxon>
        <taxon>Chlorobiia</taxon>
        <taxon>Chlorobiales</taxon>
        <taxon>Chlorobiaceae</taxon>
        <taxon>Chlorobaculum</taxon>
    </lineage>
</organism>
<proteinExistence type="inferred from homology"/>
<sequence>MFGLGGQELVLILLIVLLLFGAQKLPELAKGLGKGIKEFKKAQNEIEEEFNKATDDSSSKEKKETKA</sequence>
<comment type="function">
    <text evidence="1">Part of the twin-arginine translocation (Tat) system that transports large folded proteins containing a characteristic twin-arginine motif in their signal peptide across membranes. TatA could form the protein-conducting channel of the Tat system.</text>
</comment>
<comment type="subunit">
    <text evidence="1">Forms a complex with TatC.</text>
</comment>
<comment type="subcellular location">
    <subcellularLocation>
        <location evidence="1">Cell inner membrane</location>
        <topology evidence="1">Single-pass membrane protein</topology>
    </subcellularLocation>
</comment>
<comment type="similarity">
    <text evidence="1">Belongs to the TatA/E family.</text>
</comment>
<reference key="1">
    <citation type="journal article" date="2002" name="Proc. Natl. Acad. Sci. U.S.A.">
        <title>The complete genome sequence of Chlorobium tepidum TLS, a photosynthetic, anaerobic, green-sulfur bacterium.</title>
        <authorList>
            <person name="Eisen J.A."/>
            <person name="Nelson K.E."/>
            <person name="Paulsen I.T."/>
            <person name="Heidelberg J.F."/>
            <person name="Wu M."/>
            <person name="Dodson R.J."/>
            <person name="DeBoy R.T."/>
            <person name="Gwinn M.L."/>
            <person name="Nelson W.C."/>
            <person name="Haft D.H."/>
            <person name="Hickey E.K."/>
            <person name="Peterson J.D."/>
            <person name="Durkin A.S."/>
            <person name="Kolonay J.F."/>
            <person name="Yang F."/>
            <person name="Holt I.E."/>
            <person name="Umayam L.A."/>
            <person name="Mason T.M."/>
            <person name="Brenner M."/>
            <person name="Shea T.P."/>
            <person name="Parksey D.S."/>
            <person name="Nierman W.C."/>
            <person name="Feldblyum T.V."/>
            <person name="Hansen C.L."/>
            <person name="Craven M.B."/>
            <person name="Radune D."/>
            <person name="Vamathevan J.J."/>
            <person name="Khouri H.M."/>
            <person name="White O."/>
            <person name="Gruber T.M."/>
            <person name="Ketchum K.A."/>
            <person name="Venter J.C."/>
            <person name="Tettelin H."/>
            <person name="Bryant D.A."/>
            <person name="Fraser C.M."/>
        </authorList>
    </citation>
    <scope>NUCLEOTIDE SEQUENCE [LARGE SCALE GENOMIC DNA]</scope>
    <source>
        <strain>ATCC 49652 / DSM 12025 / NBRC 103806 / TLS</strain>
    </source>
</reference>
<keyword id="KW-0997">Cell inner membrane</keyword>
<keyword id="KW-1003">Cell membrane</keyword>
<keyword id="KW-0472">Membrane</keyword>
<keyword id="KW-0653">Protein transport</keyword>
<keyword id="KW-1185">Reference proteome</keyword>
<keyword id="KW-0811">Translocation</keyword>
<keyword id="KW-0812">Transmembrane</keyword>
<keyword id="KW-1133">Transmembrane helix</keyword>
<keyword id="KW-0813">Transport</keyword>
<gene>
    <name evidence="1" type="primary">tatA</name>
    <name type="ordered locus">CT1616</name>
</gene>
<dbReference type="EMBL" id="AE006470">
    <property type="protein sequence ID" value="AAM72841.1"/>
    <property type="molecule type" value="Genomic_DNA"/>
</dbReference>
<dbReference type="RefSeq" id="NP_662499.1">
    <property type="nucleotide sequence ID" value="NC_002932.3"/>
</dbReference>
<dbReference type="RefSeq" id="WP_010933280.1">
    <property type="nucleotide sequence ID" value="NC_002932.3"/>
</dbReference>
<dbReference type="SMR" id="Q8KC14"/>
<dbReference type="STRING" id="194439.CT1616"/>
<dbReference type="EnsemblBacteria" id="AAM72841">
    <property type="protein sequence ID" value="AAM72841"/>
    <property type="gene ID" value="CT1616"/>
</dbReference>
<dbReference type="KEGG" id="cte:CT1616"/>
<dbReference type="PATRIC" id="fig|194439.7.peg.1461"/>
<dbReference type="eggNOG" id="COG1826">
    <property type="taxonomic scope" value="Bacteria"/>
</dbReference>
<dbReference type="HOGENOM" id="CLU_086034_6_2_10"/>
<dbReference type="OrthoDB" id="9812812at2"/>
<dbReference type="Proteomes" id="UP000001007">
    <property type="component" value="Chromosome"/>
</dbReference>
<dbReference type="GO" id="GO:0033281">
    <property type="term" value="C:TAT protein transport complex"/>
    <property type="evidence" value="ECO:0007669"/>
    <property type="project" value="UniProtKB-UniRule"/>
</dbReference>
<dbReference type="GO" id="GO:0008320">
    <property type="term" value="F:protein transmembrane transporter activity"/>
    <property type="evidence" value="ECO:0007669"/>
    <property type="project" value="UniProtKB-UniRule"/>
</dbReference>
<dbReference type="GO" id="GO:0043953">
    <property type="term" value="P:protein transport by the Tat complex"/>
    <property type="evidence" value="ECO:0007669"/>
    <property type="project" value="UniProtKB-UniRule"/>
</dbReference>
<dbReference type="Gene3D" id="1.20.5.3310">
    <property type="match status" value="1"/>
</dbReference>
<dbReference type="HAMAP" id="MF_00236">
    <property type="entry name" value="TatA_E"/>
    <property type="match status" value="1"/>
</dbReference>
<dbReference type="InterPro" id="IPR003369">
    <property type="entry name" value="TatA/B/E"/>
</dbReference>
<dbReference type="InterPro" id="IPR006312">
    <property type="entry name" value="TatA/E"/>
</dbReference>
<dbReference type="NCBIfam" id="NF011430">
    <property type="entry name" value="PRK14861.1"/>
    <property type="match status" value="1"/>
</dbReference>
<dbReference type="NCBIfam" id="TIGR01411">
    <property type="entry name" value="tatAE"/>
    <property type="match status" value="1"/>
</dbReference>
<dbReference type="PANTHER" id="PTHR42982">
    <property type="entry name" value="SEC-INDEPENDENT PROTEIN TRANSLOCASE PROTEIN TATA"/>
    <property type="match status" value="1"/>
</dbReference>
<dbReference type="PANTHER" id="PTHR42982:SF1">
    <property type="entry name" value="SEC-INDEPENDENT PROTEIN TRANSLOCASE PROTEIN TATA"/>
    <property type="match status" value="1"/>
</dbReference>
<dbReference type="Pfam" id="PF02416">
    <property type="entry name" value="TatA_B_E"/>
    <property type="match status" value="1"/>
</dbReference>
<dbReference type="PRINTS" id="PR01506">
    <property type="entry name" value="TATBPROTEIN"/>
</dbReference>